<proteinExistence type="evidence at protein level"/>
<comment type="function">
    <text evidence="2">Degrades bioactive fatty acid amides to their corresponding acids, with the following preference: N-palmitoylethanolamine &gt; N-myristoylethanolamine &gt; N-stearoylethanolamine &gt; N-oleoylethanolamine &gt; N-linoleoylethanolamine &gt; N-arachidonoylethanolamine.</text>
</comment>
<comment type="catalytic activity">
    <reaction evidence="1">
        <text>N-hexadecanoylethanolamine + H2O = ethanolamine + hexadecanoate</text>
        <dbReference type="Rhea" id="RHEA:45064"/>
        <dbReference type="ChEBI" id="CHEBI:7896"/>
        <dbReference type="ChEBI" id="CHEBI:15377"/>
        <dbReference type="ChEBI" id="CHEBI:57603"/>
        <dbReference type="ChEBI" id="CHEBI:71464"/>
    </reaction>
    <physiologicalReaction direction="left-to-right" evidence="1">
        <dbReference type="Rhea" id="RHEA:45065"/>
    </physiologicalReaction>
</comment>
<comment type="catalytic activity">
    <reaction evidence="1">
        <text>an N-(long-chain fatty acyl)ethanolamine + H2O = a long-chain fatty acid + ethanolamine</text>
        <dbReference type="Rhea" id="RHEA:17505"/>
        <dbReference type="ChEBI" id="CHEBI:15377"/>
        <dbReference type="ChEBI" id="CHEBI:15897"/>
        <dbReference type="ChEBI" id="CHEBI:57560"/>
        <dbReference type="ChEBI" id="CHEBI:57603"/>
        <dbReference type="EC" id="3.5.1.60"/>
    </reaction>
    <physiologicalReaction direction="left-to-right" evidence="1">
        <dbReference type="Rhea" id="RHEA:17506"/>
    </physiologicalReaction>
</comment>
<comment type="catalytic activity">
    <reaction evidence="1">
        <text>N-dodecanoylethanolamine + H2O = dodecanoate + ethanolamine</text>
        <dbReference type="Rhea" id="RHEA:45456"/>
        <dbReference type="ChEBI" id="CHEBI:15377"/>
        <dbReference type="ChEBI" id="CHEBI:18262"/>
        <dbReference type="ChEBI" id="CHEBI:57603"/>
        <dbReference type="ChEBI" id="CHEBI:85263"/>
    </reaction>
    <physiologicalReaction direction="left-to-right" evidence="1">
        <dbReference type="Rhea" id="RHEA:45457"/>
    </physiologicalReaction>
</comment>
<comment type="catalytic activity">
    <reaction evidence="1">
        <text>N-tetradecanoylethanolamine + H2O = tetradecanoate + ethanolamine</text>
        <dbReference type="Rhea" id="RHEA:45452"/>
        <dbReference type="ChEBI" id="CHEBI:15377"/>
        <dbReference type="ChEBI" id="CHEBI:30807"/>
        <dbReference type="ChEBI" id="CHEBI:57603"/>
        <dbReference type="ChEBI" id="CHEBI:85262"/>
    </reaction>
    <physiologicalReaction direction="left-to-right" evidence="1">
        <dbReference type="Rhea" id="RHEA:45453"/>
    </physiologicalReaction>
</comment>
<comment type="catalytic activity">
    <reaction evidence="1">
        <text>an N-acylsphing-4-enine + H2O = sphing-4-enine + a fatty acid</text>
        <dbReference type="Rhea" id="RHEA:20856"/>
        <dbReference type="ChEBI" id="CHEBI:15377"/>
        <dbReference type="ChEBI" id="CHEBI:28868"/>
        <dbReference type="ChEBI" id="CHEBI:52639"/>
        <dbReference type="ChEBI" id="CHEBI:57756"/>
        <dbReference type="EC" id="3.5.1.23"/>
    </reaction>
    <physiologicalReaction direction="left-to-right" evidence="1">
        <dbReference type="Rhea" id="RHEA:20857"/>
    </physiologicalReaction>
</comment>
<comment type="catalytic activity">
    <reaction evidence="1">
        <text>N-hexadecanoylsphing-4-enine + H2O = sphing-4-enine + hexadecanoate</text>
        <dbReference type="Rhea" id="RHEA:38891"/>
        <dbReference type="ChEBI" id="CHEBI:7896"/>
        <dbReference type="ChEBI" id="CHEBI:15377"/>
        <dbReference type="ChEBI" id="CHEBI:57756"/>
        <dbReference type="ChEBI" id="CHEBI:72959"/>
    </reaction>
    <physiologicalReaction direction="left-to-right" evidence="1">
        <dbReference type="Rhea" id="RHEA:38892"/>
    </physiologicalReaction>
</comment>
<comment type="catalytic activity">
    <reaction evidence="1">
        <text>N-dodecanoylsphing-4-enine + H2O = dodecanoate + sphing-4-enine</text>
        <dbReference type="Rhea" id="RHEA:41291"/>
        <dbReference type="ChEBI" id="CHEBI:15377"/>
        <dbReference type="ChEBI" id="CHEBI:18262"/>
        <dbReference type="ChEBI" id="CHEBI:57756"/>
        <dbReference type="ChEBI" id="CHEBI:72956"/>
    </reaction>
    <physiologicalReaction direction="left-to-right" evidence="1">
        <dbReference type="Rhea" id="RHEA:41292"/>
    </physiologicalReaction>
</comment>
<comment type="pathway">
    <text evidence="1">Lipid metabolism; fatty acid metabolism.</text>
</comment>
<comment type="subunit">
    <text evidence="4">Heterodimer of an alpha and a beta subunit, produced by autocatalytic cleavage.</text>
</comment>
<comment type="subcellular location">
    <subcellularLocation>
        <location evidence="1">Lysosome</location>
    </subcellularLocation>
    <subcellularLocation>
        <location evidence="1">Membrane</location>
        <topology evidence="1">Peripheral membrane protein</topology>
    </subcellularLocation>
</comment>
<comment type="PTM">
    <text evidence="1 4">N-glycosylated (PubMed:30301806). Tunicamycin treatment causes a reduction in specific activity against N-palmitoylethanolamine (By similarity).</text>
</comment>
<comment type="PTM">
    <text evidence="1 4">Autoproteolytic cleavage at pH 4.5 gives rise to the alpha and beta subunit (PubMed:30301806). Cleavage gives rise to a conformation change that activates the enzyme. The same catalytic Cys residue mediates the autoproteolytic cleavage and subsequent hydrolysis of lipid substrates (By similarity).</text>
</comment>
<comment type="similarity">
    <text evidence="6">Belongs to the acid ceramidase family.</text>
</comment>
<protein>
    <recommendedName>
        <fullName evidence="2">N-acylethanolamine-hydrolyzing acid amidase</fullName>
        <ecNumber evidence="2">3.5.1.60</ecNumber>
    </recommendedName>
    <alternativeName>
        <fullName evidence="2">Acylsphingosine deacylase NAAA</fullName>
        <ecNumber evidence="2">3.5.1.23</ecNumber>
    </alternativeName>
    <component>
        <recommendedName>
            <fullName>N-acylethanolamine-hydrolyzing acid amidase subunit alpha</fullName>
        </recommendedName>
    </component>
    <component>
        <recommendedName>
            <fullName>N-acylethanolamine-hydrolyzing acid amidase subunit beta</fullName>
        </recommendedName>
    </component>
</protein>
<feature type="signal peptide" evidence="3">
    <location>
        <begin position="1"/>
        <end position="22"/>
    </location>
</feature>
<feature type="chain" id="PRO_0000446524" description="N-acylethanolamine-hydrolyzing acid amidase">
    <location>
        <begin position="23"/>
        <end position="354"/>
    </location>
</feature>
<feature type="chain" id="PRO_0000446525" description="N-acylethanolamine-hydrolyzing acid amidase subunit alpha" evidence="7">
    <location>
        <begin position="23"/>
        <end position="122"/>
    </location>
</feature>
<feature type="chain" id="PRO_0000446526" description="N-acylethanolamine-hydrolyzing acid amidase subunit beta" evidence="7">
    <location>
        <begin position="123"/>
        <end position="354"/>
    </location>
</feature>
<feature type="active site" description="Nucleophile" evidence="4">
    <location>
        <position position="123"/>
    </location>
</feature>
<feature type="site" description="Important for enzyme activity" evidence="1">
    <location>
        <position position="139"/>
    </location>
</feature>
<feature type="site" description="Important for enzyme activity" evidence="1">
    <location>
        <position position="284"/>
    </location>
</feature>
<feature type="glycosylation site" description="N-linked (GlcNAc...) asparagine" evidence="4 8">
    <location>
        <position position="35"/>
    </location>
</feature>
<feature type="glycosylation site" description="N-linked (GlcNAc...) asparagine" evidence="4 8">
    <location>
        <position position="104"/>
    </location>
</feature>
<feature type="glycosylation site" description="N-linked (GlcNAc...) asparagine" evidence="4 8">
    <location>
        <position position="306"/>
    </location>
</feature>
<feature type="glycosylation site" description="N-linked (GlcNAc...) asparagine" evidence="3">
    <location>
        <position position="312"/>
    </location>
</feature>
<feature type="glycosylation site" description="N-linked (GlcNAc...) asparagine" evidence="3">
    <location>
        <position position="352"/>
    </location>
</feature>
<feature type="strand" evidence="9">
    <location>
        <begin position="33"/>
        <end position="37"/>
    </location>
</feature>
<feature type="helix" evidence="9">
    <location>
        <begin position="42"/>
        <end position="44"/>
    </location>
</feature>
<feature type="helix" evidence="9">
    <location>
        <begin position="47"/>
        <end position="50"/>
    </location>
</feature>
<feature type="helix" evidence="9">
    <location>
        <begin position="55"/>
        <end position="69"/>
    </location>
</feature>
<feature type="helix" evidence="9">
    <location>
        <begin position="72"/>
        <end position="83"/>
    </location>
</feature>
<feature type="helix" evidence="9">
    <location>
        <begin position="85"/>
        <end position="87"/>
    </location>
</feature>
<feature type="helix" evidence="9">
    <location>
        <begin position="92"/>
        <end position="103"/>
    </location>
</feature>
<feature type="helix" evidence="9">
    <location>
        <begin position="107"/>
        <end position="114"/>
    </location>
</feature>
<feature type="helix" evidence="9">
    <location>
        <begin position="116"/>
        <end position="119"/>
    </location>
</feature>
<feature type="strand" evidence="9">
    <location>
        <begin position="124"/>
        <end position="129"/>
    </location>
</feature>
<feature type="strand" evidence="9">
    <location>
        <begin position="135"/>
        <end position="142"/>
    </location>
</feature>
<feature type="helix" evidence="9">
    <location>
        <begin position="146"/>
        <end position="152"/>
    </location>
</feature>
<feature type="strand" evidence="9">
    <location>
        <begin position="153"/>
        <end position="159"/>
    </location>
</feature>
<feature type="strand" evidence="9">
    <location>
        <begin position="161"/>
        <end position="171"/>
    </location>
</feature>
<feature type="strand" evidence="9">
    <location>
        <begin position="178"/>
        <end position="182"/>
    </location>
</feature>
<feature type="turn" evidence="9">
    <location>
        <begin position="183"/>
        <end position="185"/>
    </location>
</feature>
<feature type="strand" evidence="9">
    <location>
        <begin position="186"/>
        <end position="192"/>
    </location>
</feature>
<feature type="helix" evidence="9">
    <location>
        <begin position="199"/>
        <end position="208"/>
    </location>
</feature>
<feature type="helix" evidence="9">
    <location>
        <begin position="213"/>
        <end position="223"/>
    </location>
</feature>
<feature type="helix" evidence="9">
    <location>
        <begin position="227"/>
        <end position="236"/>
    </location>
</feature>
<feature type="strand" evidence="9">
    <location>
        <begin position="239"/>
        <end position="241"/>
    </location>
</feature>
<feature type="strand" evidence="9">
    <location>
        <begin position="243"/>
        <end position="248"/>
    </location>
</feature>
<feature type="strand" evidence="9">
    <location>
        <begin position="255"/>
        <end position="260"/>
    </location>
</feature>
<feature type="strand" evidence="9">
    <location>
        <begin position="262"/>
        <end position="270"/>
    </location>
</feature>
<feature type="helix" evidence="9">
    <location>
        <begin position="273"/>
        <end position="275"/>
    </location>
</feature>
<feature type="strand" evidence="9">
    <location>
        <begin position="279"/>
        <end position="282"/>
    </location>
</feature>
<feature type="strand" evidence="9">
    <location>
        <begin position="293"/>
        <end position="295"/>
    </location>
</feature>
<feature type="helix" evidence="9">
    <location>
        <begin position="298"/>
        <end position="308"/>
    </location>
</feature>
<feature type="helix" evidence="9">
    <location>
        <begin position="315"/>
        <end position="321"/>
    </location>
</feature>
<feature type="turn" evidence="9">
    <location>
        <begin position="325"/>
        <end position="327"/>
    </location>
</feature>
<feature type="strand" evidence="9">
    <location>
        <begin position="332"/>
        <end position="338"/>
    </location>
</feature>
<feature type="helix" evidence="9">
    <location>
        <begin position="343"/>
        <end position="345"/>
    </location>
</feature>
<feature type="strand" evidence="9">
    <location>
        <begin position="347"/>
        <end position="350"/>
    </location>
</feature>
<keyword id="KW-0002">3D-structure</keyword>
<keyword id="KW-0068">Autocatalytic cleavage</keyword>
<keyword id="KW-0276">Fatty acid metabolism</keyword>
<keyword id="KW-0325">Glycoprotein</keyword>
<keyword id="KW-0378">Hydrolase</keyword>
<keyword id="KW-0442">Lipid degradation</keyword>
<keyword id="KW-0443">Lipid metabolism</keyword>
<keyword id="KW-0458">Lysosome</keyword>
<keyword id="KW-0472">Membrane</keyword>
<keyword id="KW-1185">Reference proteome</keyword>
<keyword id="KW-0732">Signal</keyword>
<keyword id="KW-0865">Zymogen</keyword>
<evidence type="ECO:0000250" key="1">
    <source>
        <dbReference type="UniProtKB" id="Q02083"/>
    </source>
</evidence>
<evidence type="ECO:0000250" key="2">
    <source>
        <dbReference type="UniProtKB" id="Q5KTC7"/>
    </source>
</evidence>
<evidence type="ECO:0000255" key="3"/>
<evidence type="ECO:0000269" key="4">
    <source>
    </source>
</evidence>
<evidence type="ECO:0000303" key="5">
    <source>
    </source>
</evidence>
<evidence type="ECO:0000305" key="6"/>
<evidence type="ECO:0000305" key="7">
    <source>
    </source>
</evidence>
<evidence type="ECO:0007744" key="8">
    <source>
        <dbReference type="PDB" id="6DY2"/>
    </source>
</evidence>
<evidence type="ECO:0007829" key="9">
    <source>
        <dbReference type="PDB" id="6DY2"/>
    </source>
</evidence>
<accession>H0VCJ6</accession>
<name>NAAA_CAVPO</name>
<gene>
    <name evidence="5" type="primary">NAAA</name>
</gene>
<dbReference type="EC" id="3.5.1.60" evidence="2"/>
<dbReference type="EC" id="3.5.1.23" evidence="2"/>
<dbReference type="EMBL" id="AAKN02008187">
    <property type="status" value="NOT_ANNOTATED_CDS"/>
    <property type="molecule type" value="Genomic_DNA"/>
</dbReference>
<dbReference type="PDB" id="6DY2">
    <property type="method" value="X-ray"/>
    <property type="resolution" value="2.71 A"/>
    <property type="chains" value="A/C=28-122, B/D=123-354"/>
</dbReference>
<dbReference type="PDBsum" id="6DY2"/>
<dbReference type="SMR" id="H0VCJ6"/>
<dbReference type="FunCoup" id="H0VCJ6">
    <property type="interactions" value="397"/>
</dbReference>
<dbReference type="STRING" id="10141.ENSCPOP00000007657"/>
<dbReference type="GlyCosmos" id="H0VCJ6">
    <property type="glycosylation" value="5 sites, No reported glycans"/>
</dbReference>
<dbReference type="iPTMnet" id="H0VCJ6"/>
<dbReference type="eggNOG" id="ENOG502QT7H">
    <property type="taxonomic scope" value="Eukaryota"/>
</dbReference>
<dbReference type="HOGENOM" id="CLU_054401_0_0_1"/>
<dbReference type="InParanoid" id="H0VCJ6"/>
<dbReference type="TreeFam" id="TF313219"/>
<dbReference type="BRENDA" id="3.5.1.60">
    <property type="organism ID" value="1225"/>
</dbReference>
<dbReference type="UniPathway" id="UPA00199"/>
<dbReference type="Proteomes" id="UP000005447">
    <property type="component" value="Unassembled WGS sequence"/>
</dbReference>
<dbReference type="GO" id="GO:0005764">
    <property type="term" value="C:lysosome"/>
    <property type="evidence" value="ECO:0000250"/>
    <property type="project" value="UniProtKB"/>
</dbReference>
<dbReference type="GO" id="GO:0016020">
    <property type="term" value="C:membrane"/>
    <property type="evidence" value="ECO:0000250"/>
    <property type="project" value="UniProtKB"/>
</dbReference>
<dbReference type="GO" id="GO:0017064">
    <property type="term" value="F:fatty acid amide hydrolase activity"/>
    <property type="evidence" value="ECO:0000250"/>
    <property type="project" value="UniProtKB"/>
</dbReference>
<dbReference type="GO" id="GO:0047412">
    <property type="term" value="F:N-(long-chain-acyl)ethanolamine deacylase activity"/>
    <property type="evidence" value="ECO:0000250"/>
    <property type="project" value="UniProtKB"/>
</dbReference>
<dbReference type="GO" id="GO:0017040">
    <property type="term" value="F:N-acylsphingosine amidohydrolase activity"/>
    <property type="evidence" value="ECO:0000250"/>
    <property type="project" value="UniProtKB"/>
</dbReference>
<dbReference type="GO" id="GO:0006631">
    <property type="term" value="P:fatty acid metabolic process"/>
    <property type="evidence" value="ECO:0000250"/>
    <property type="project" value="UniProtKB"/>
</dbReference>
<dbReference type="GO" id="GO:0016042">
    <property type="term" value="P:lipid catabolic process"/>
    <property type="evidence" value="ECO:0007669"/>
    <property type="project" value="UniProtKB-KW"/>
</dbReference>
<dbReference type="GO" id="GO:0070291">
    <property type="term" value="P:N-acylethanolamine metabolic process"/>
    <property type="evidence" value="ECO:0000250"/>
    <property type="project" value="UniProtKB"/>
</dbReference>
<dbReference type="GO" id="GO:0070292">
    <property type="term" value="P:N-acylphosphatidylethanolamine metabolic process"/>
    <property type="evidence" value="ECO:0000250"/>
    <property type="project" value="UniProtKB"/>
</dbReference>
<dbReference type="GO" id="GO:0006670">
    <property type="term" value="P:sphingosine metabolic process"/>
    <property type="evidence" value="ECO:0000250"/>
    <property type="project" value="UniProtKB"/>
</dbReference>
<dbReference type="CDD" id="cd01903">
    <property type="entry name" value="Ntn_AC_NAAA"/>
    <property type="match status" value="1"/>
</dbReference>
<dbReference type="FunFam" id="3.60.60.10:FF:000003">
    <property type="entry name" value="N-acylethanolamine-hydrolyzing acid amidase"/>
    <property type="match status" value="1"/>
</dbReference>
<dbReference type="Gene3D" id="3.60.60.10">
    <property type="entry name" value="Penicillin V Acylase, Chain A"/>
    <property type="match status" value="1"/>
</dbReference>
<dbReference type="InterPro" id="IPR016699">
    <property type="entry name" value="Acid_ceramidase-like"/>
</dbReference>
<dbReference type="InterPro" id="IPR029130">
    <property type="entry name" value="Acid_ceramidase_N"/>
</dbReference>
<dbReference type="PANTHER" id="PTHR28583">
    <property type="entry name" value="ACID AMIDASE"/>
    <property type="match status" value="1"/>
</dbReference>
<dbReference type="PANTHER" id="PTHR28583:SF4">
    <property type="entry name" value="N-ACYLETHANOLAMINE-HYDROLYZING ACID AMIDASE"/>
    <property type="match status" value="1"/>
</dbReference>
<dbReference type="Pfam" id="PF15508">
    <property type="entry name" value="NAAA-beta"/>
    <property type="match status" value="1"/>
</dbReference>
<dbReference type="PIRSF" id="PIRSF017632">
    <property type="entry name" value="Acid_ceramidase-like"/>
    <property type="match status" value="1"/>
</dbReference>
<reference key="1">
    <citation type="journal article" date="2011" name="Nature">
        <title>A high-resolution map of human evolutionary constraint using 29 mammals.</title>
        <authorList>
            <person name="Lindblad-Toh K."/>
            <person name="Garber M."/>
            <person name="Zuk O."/>
            <person name="Lin M.F."/>
            <person name="Parker B.J."/>
            <person name="Washietl S."/>
            <person name="Kheradpour P."/>
            <person name="Ernst J."/>
            <person name="Jordan G."/>
            <person name="Mauceli E."/>
            <person name="Ward L.D."/>
            <person name="Lowe C.B."/>
            <person name="Holloway A.K."/>
            <person name="Clamp M."/>
            <person name="Gnerre S."/>
            <person name="Alfoldi J."/>
            <person name="Beal K."/>
            <person name="Chang J."/>
            <person name="Clawson H."/>
            <person name="Cuff J."/>
            <person name="Di Palma F."/>
            <person name="Fitzgerald S."/>
            <person name="Flicek P."/>
            <person name="Guttman M."/>
            <person name="Hubisz M.J."/>
            <person name="Jaffe D.B."/>
            <person name="Jungreis I."/>
            <person name="Kent W.J."/>
            <person name="Kostka D."/>
            <person name="Lara M."/>
            <person name="Martins A.L."/>
            <person name="Massingham T."/>
            <person name="Moltke I."/>
            <person name="Raney B.J."/>
            <person name="Rasmussen M.D."/>
            <person name="Robinson J."/>
            <person name="Stark A."/>
            <person name="Vilella A.J."/>
            <person name="Wen J."/>
            <person name="Xie X."/>
            <person name="Zody M.C."/>
            <person name="Baldwin J."/>
            <person name="Bloom T."/>
            <person name="Chin C.W."/>
            <person name="Heiman D."/>
            <person name="Nicol R."/>
            <person name="Nusbaum C."/>
            <person name="Young S."/>
            <person name="Wilkinson J."/>
            <person name="Worley K.C."/>
            <person name="Kovar C.L."/>
            <person name="Muzny D.M."/>
            <person name="Gibbs R.A."/>
            <person name="Cree A."/>
            <person name="Dihn H.H."/>
            <person name="Fowler G."/>
            <person name="Jhangiani S."/>
            <person name="Joshi V."/>
            <person name="Lee S."/>
            <person name="Lewis L.R."/>
            <person name="Nazareth L.V."/>
            <person name="Okwuonu G."/>
            <person name="Santibanez J."/>
            <person name="Warren W.C."/>
            <person name="Mardis E.R."/>
            <person name="Weinstock G.M."/>
            <person name="Wilson R.K."/>
            <person name="Delehaunty K."/>
            <person name="Dooling D."/>
            <person name="Fronik C."/>
            <person name="Fulton L."/>
            <person name="Fulton B."/>
            <person name="Graves T."/>
            <person name="Minx P."/>
            <person name="Sodergren E."/>
            <person name="Birney E."/>
            <person name="Margulies E.H."/>
            <person name="Herrero J."/>
            <person name="Green E.D."/>
            <person name="Haussler D."/>
            <person name="Siepel A."/>
            <person name="Goldman N."/>
            <person name="Pollard K.S."/>
            <person name="Pedersen J.S."/>
            <person name="Lander E.S."/>
            <person name="Kellis M."/>
        </authorList>
    </citation>
    <scope>NUCLEOTIDE SEQUENCE [LARGE SCALE GENOMIC DNA]</scope>
    <source>
        <strain>2N</strain>
    </source>
</reference>
<reference evidence="8" key="2">
    <citation type="journal article" date="2018" name="Proc. Natl. Acad. Sci. U.S.A.">
        <title>Molecular mechanism of activation of the immunoregulatory amidase NAAA.</title>
        <authorList>
            <person name="Gorelik A."/>
            <person name="Gebai A."/>
            <person name="Illes K."/>
            <person name="Piomelli D."/>
            <person name="Nagar B."/>
        </authorList>
    </citation>
    <scope>X-RAY CRYSTALLOGRAPHY (2.71 ANGSTROMS) OF 28-122 AND 123-354 IN COMPLEX WITH INHIBITOR</scope>
    <scope>ACTIVE SITE</scope>
    <scope>SUBUNIT</scope>
    <scope>PROTEOLYTIC CLEAVAGE</scope>
    <scope>GLYCOSYLATION AT ASN-35; ASN-104 AND ASN-306</scope>
</reference>
<organism>
    <name type="scientific">Cavia porcellus</name>
    <name type="common">Guinea pig</name>
    <dbReference type="NCBI Taxonomy" id="10141"/>
    <lineage>
        <taxon>Eukaryota</taxon>
        <taxon>Metazoa</taxon>
        <taxon>Chordata</taxon>
        <taxon>Craniata</taxon>
        <taxon>Vertebrata</taxon>
        <taxon>Euteleostomi</taxon>
        <taxon>Mammalia</taxon>
        <taxon>Eutheria</taxon>
        <taxon>Euarchontoglires</taxon>
        <taxon>Glires</taxon>
        <taxon>Rodentia</taxon>
        <taxon>Hystricomorpha</taxon>
        <taxon>Caviidae</taxon>
        <taxon>Cavia</taxon>
    </lineage>
</organism>
<sequence length="354" mass="39035">MRSPGIVLLLLLLLLLPPGAAPCPADLCPAPPRVNVSLDAAPAARWLPVLRLFDPGLLRAAVARIVGDRVPKWRDVIGKLVAEMESFLPQPYTKEIRGISDFLNLSLADGFIVNLAYEASAFCTSVVAQDSRGHIYHGRNLDYPFGDLLRKMTVDVQFLKNGQIAFTGTTFIGYVGLWTGQSPYKFTVSGDERDKGWWWENMIAALFQGHSPVSWLIRTTLSESEDFEASVYKLAKTPLIADVYYIVGGTAPGEGVVVTRNRGGPADIWPLDPLNGAWFRVETNYDHWKPVPKSDDRRTPAIKALNATGQANLSLEALFQVLSVVPVCNKITVYTTVMSAATPDKYMTRIRNLS</sequence>